<evidence type="ECO:0000255" key="1">
    <source>
        <dbReference type="HAMAP-Rule" id="MF_00122"/>
    </source>
</evidence>
<organism>
    <name type="scientific">Leptothrix cholodnii (strain ATCC 51168 / LMG 8142 / SP-6)</name>
    <name type="common">Leptothrix discophora (strain SP-6)</name>
    <dbReference type="NCBI Taxonomy" id="395495"/>
    <lineage>
        <taxon>Bacteria</taxon>
        <taxon>Pseudomonadati</taxon>
        <taxon>Pseudomonadota</taxon>
        <taxon>Betaproteobacteria</taxon>
        <taxon>Burkholderiales</taxon>
        <taxon>Sphaerotilaceae</taxon>
        <taxon>Leptothrix</taxon>
    </lineage>
</organism>
<sequence>MALTPADVSRIANLARLELSTAEQSDLLVQLNGFFGIVERMRAVDTTGVAPLYTPLSAVQDVSLRLRDDAVTETDQREANQKSAPAVEGGLFLVPRVIE</sequence>
<protein>
    <recommendedName>
        <fullName evidence="1">Aspartyl/glutamyl-tRNA(Asn/Gln) amidotransferase subunit C</fullName>
        <shortName evidence="1">Asp/Glu-ADT subunit C</shortName>
        <ecNumber evidence="1">6.3.5.-</ecNumber>
    </recommendedName>
</protein>
<name>GATC_LEPCP</name>
<keyword id="KW-0067">ATP-binding</keyword>
<keyword id="KW-0436">Ligase</keyword>
<keyword id="KW-0547">Nucleotide-binding</keyword>
<keyword id="KW-0648">Protein biosynthesis</keyword>
<keyword id="KW-1185">Reference proteome</keyword>
<proteinExistence type="inferred from homology"/>
<reference key="1">
    <citation type="submission" date="2008-03" db="EMBL/GenBank/DDBJ databases">
        <title>Complete sequence of Leptothrix cholodnii SP-6.</title>
        <authorList>
            <consortium name="US DOE Joint Genome Institute"/>
            <person name="Copeland A."/>
            <person name="Lucas S."/>
            <person name="Lapidus A."/>
            <person name="Glavina del Rio T."/>
            <person name="Dalin E."/>
            <person name="Tice H."/>
            <person name="Bruce D."/>
            <person name="Goodwin L."/>
            <person name="Pitluck S."/>
            <person name="Chertkov O."/>
            <person name="Brettin T."/>
            <person name="Detter J.C."/>
            <person name="Han C."/>
            <person name="Kuske C.R."/>
            <person name="Schmutz J."/>
            <person name="Larimer F."/>
            <person name="Land M."/>
            <person name="Hauser L."/>
            <person name="Kyrpides N."/>
            <person name="Lykidis A."/>
            <person name="Emerson D."/>
            <person name="Richardson P."/>
        </authorList>
    </citation>
    <scope>NUCLEOTIDE SEQUENCE [LARGE SCALE GENOMIC DNA]</scope>
    <source>
        <strain>ATCC 51168 / LMG 8142 / SP-6</strain>
    </source>
</reference>
<dbReference type="EC" id="6.3.5.-" evidence="1"/>
<dbReference type="EMBL" id="CP001013">
    <property type="protein sequence ID" value="ACB32780.1"/>
    <property type="molecule type" value="Genomic_DNA"/>
</dbReference>
<dbReference type="RefSeq" id="WP_012345542.1">
    <property type="nucleotide sequence ID" value="NC_010524.1"/>
</dbReference>
<dbReference type="SMR" id="B1XY11"/>
<dbReference type="STRING" id="395495.Lcho_0505"/>
<dbReference type="KEGG" id="lch:Lcho_0505"/>
<dbReference type="eggNOG" id="COG0721">
    <property type="taxonomic scope" value="Bacteria"/>
</dbReference>
<dbReference type="HOGENOM" id="CLU_105899_2_2_4"/>
<dbReference type="OrthoDB" id="9794326at2"/>
<dbReference type="Proteomes" id="UP000001693">
    <property type="component" value="Chromosome"/>
</dbReference>
<dbReference type="GO" id="GO:0050566">
    <property type="term" value="F:asparaginyl-tRNA synthase (glutamine-hydrolyzing) activity"/>
    <property type="evidence" value="ECO:0007669"/>
    <property type="project" value="RHEA"/>
</dbReference>
<dbReference type="GO" id="GO:0005524">
    <property type="term" value="F:ATP binding"/>
    <property type="evidence" value="ECO:0007669"/>
    <property type="project" value="UniProtKB-KW"/>
</dbReference>
<dbReference type="GO" id="GO:0050567">
    <property type="term" value="F:glutaminyl-tRNA synthase (glutamine-hydrolyzing) activity"/>
    <property type="evidence" value="ECO:0007669"/>
    <property type="project" value="UniProtKB-UniRule"/>
</dbReference>
<dbReference type="GO" id="GO:0070681">
    <property type="term" value="P:glutaminyl-tRNAGln biosynthesis via transamidation"/>
    <property type="evidence" value="ECO:0007669"/>
    <property type="project" value="TreeGrafter"/>
</dbReference>
<dbReference type="GO" id="GO:0006450">
    <property type="term" value="P:regulation of translational fidelity"/>
    <property type="evidence" value="ECO:0007669"/>
    <property type="project" value="InterPro"/>
</dbReference>
<dbReference type="GO" id="GO:0006412">
    <property type="term" value="P:translation"/>
    <property type="evidence" value="ECO:0007669"/>
    <property type="project" value="UniProtKB-UniRule"/>
</dbReference>
<dbReference type="Gene3D" id="1.10.20.60">
    <property type="entry name" value="Glu-tRNAGln amidotransferase C subunit, N-terminal domain"/>
    <property type="match status" value="1"/>
</dbReference>
<dbReference type="HAMAP" id="MF_00122">
    <property type="entry name" value="GatC"/>
    <property type="match status" value="1"/>
</dbReference>
<dbReference type="InterPro" id="IPR036113">
    <property type="entry name" value="Asp/Glu-ADT_sf_sub_c"/>
</dbReference>
<dbReference type="InterPro" id="IPR003837">
    <property type="entry name" value="GatC"/>
</dbReference>
<dbReference type="NCBIfam" id="TIGR00135">
    <property type="entry name" value="gatC"/>
    <property type="match status" value="1"/>
</dbReference>
<dbReference type="PANTHER" id="PTHR15004">
    <property type="entry name" value="GLUTAMYL-TRNA(GLN) AMIDOTRANSFERASE SUBUNIT C, MITOCHONDRIAL"/>
    <property type="match status" value="1"/>
</dbReference>
<dbReference type="PANTHER" id="PTHR15004:SF0">
    <property type="entry name" value="GLUTAMYL-TRNA(GLN) AMIDOTRANSFERASE SUBUNIT C, MITOCHONDRIAL"/>
    <property type="match status" value="1"/>
</dbReference>
<dbReference type="Pfam" id="PF02686">
    <property type="entry name" value="GatC"/>
    <property type="match status" value="1"/>
</dbReference>
<dbReference type="SUPFAM" id="SSF141000">
    <property type="entry name" value="Glu-tRNAGln amidotransferase C subunit"/>
    <property type="match status" value="1"/>
</dbReference>
<feature type="chain" id="PRO_1000095291" description="Aspartyl/glutamyl-tRNA(Asn/Gln) amidotransferase subunit C">
    <location>
        <begin position="1"/>
        <end position="99"/>
    </location>
</feature>
<gene>
    <name evidence="1" type="primary">gatC</name>
    <name type="ordered locus">Lcho_0505</name>
</gene>
<accession>B1XY11</accession>
<comment type="function">
    <text evidence="1">Allows the formation of correctly charged Asn-tRNA(Asn) or Gln-tRNA(Gln) through the transamidation of misacylated Asp-tRNA(Asn) or Glu-tRNA(Gln) in organisms which lack either or both of asparaginyl-tRNA or glutaminyl-tRNA synthetases. The reaction takes place in the presence of glutamine and ATP through an activated phospho-Asp-tRNA(Asn) or phospho-Glu-tRNA(Gln).</text>
</comment>
<comment type="catalytic activity">
    <reaction evidence="1">
        <text>L-glutamyl-tRNA(Gln) + L-glutamine + ATP + H2O = L-glutaminyl-tRNA(Gln) + L-glutamate + ADP + phosphate + H(+)</text>
        <dbReference type="Rhea" id="RHEA:17521"/>
        <dbReference type="Rhea" id="RHEA-COMP:9681"/>
        <dbReference type="Rhea" id="RHEA-COMP:9684"/>
        <dbReference type="ChEBI" id="CHEBI:15377"/>
        <dbReference type="ChEBI" id="CHEBI:15378"/>
        <dbReference type="ChEBI" id="CHEBI:29985"/>
        <dbReference type="ChEBI" id="CHEBI:30616"/>
        <dbReference type="ChEBI" id="CHEBI:43474"/>
        <dbReference type="ChEBI" id="CHEBI:58359"/>
        <dbReference type="ChEBI" id="CHEBI:78520"/>
        <dbReference type="ChEBI" id="CHEBI:78521"/>
        <dbReference type="ChEBI" id="CHEBI:456216"/>
    </reaction>
</comment>
<comment type="catalytic activity">
    <reaction evidence="1">
        <text>L-aspartyl-tRNA(Asn) + L-glutamine + ATP + H2O = L-asparaginyl-tRNA(Asn) + L-glutamate + ADP + phosphate + 2 H(+)</text>
        <dbReference type="Rhea" id="RHEA:14513"/>
        <dbReference type="Rhea" id="RHEA-COMP:9674"/>
        <dbReference type="Rhea" id="RHEA-COMP:9677"/>
        <dbReference type="ChEBI" id="CHEBI:15377"/>
        <dbReference type="ChEBI" id="CHEBI:15378"/>
        <dbReference type="ChEBI" id="CHEBI:29985"/>
        <dbReference type="ChEBI" id="CHEBI:30616"/>
        <dbReference type="ChEBI" id="CHEBI:43474"/>
        <dbReference type="ChEBI" id="CHEBI:58359"/>
        <dbReference type="ChEBI" id="CHEBI:78515"/>
        <dbReference type="ChEBI" id="CHEBI:78516"/>
        <dbReference type="ChEBI" id="CHEBI:456216"/>
    </reaction>
</comment>
<comment type="subunit">
    <text evidence="1">Heterotrimer of A, B and C subunits.</text>
</comment>
<comment type="similarity">
    <text evidence="1">Belongs to the GatC family.</text>
</comment>